<comment type="function">
    <text evidence="1">Catalyzes the condensation of pantoate with beta-alanine in an ATP-dependent reaction via a pantoyl-adenylate intermediate.</text>
</comment>
<comment type="catalytic activity">
    <reaction evidence="1">
        <text>(R)-pantoate + beta-alanine + ATP = (R)-pantothenate + AMP + diphosphate + H(+)</text>
        <dbReference type="Rhea" id="RHEA:10912"/>
        <dbReference type="ChEBI" id="CHEBI:15378"/>
        <dbReference type="ChEBI" id="CHEBI:15980"/>
        <dbReference type="ChEBI" id="CHEBI:29032"/>
        <dbReference type="ChEBI" id="CHEBI:30616"/>
        <dbReference type="ChEBI" id="CHEBI:33019"/>
        <dbReference type="ChEBI" id="CHEBI:57966"/>
        <dbReference type="ChEBI" id="CHEBI:456215"/>
        <dbReference type="EC" id="6.3.2.1"/>
    </reaction>
</comment>
<comment type="pathway">
    <text evidence="1">Cofactor biosynthesis; (R)-pantothenate biosynthesis; (R)-pantothenate from (R)-pantoate and beta-alanine: step 1/1.</text>
</comment>
<comment type="subunit">
    <text evidence="1">Homodimer.</text>
</comment>
<comment type="subcellular location">
    <subcellularLocation>
        <location evidence="1">Cytoplasm</location>
    </subcellularLocation>
</comment>
<comment type="miscellaneous">
    <text evidence="1">The reaction proceeds by a bi uni uni bi ping pong mechanism.</text>
</comment>
<comment type="similarity">
    <text evidence="1">Belongs to the pantothenate synthetase family.</text>
</comment>
<comment type="sequence caution" evidence="2">
    <conflict type="erroneous initiation">
        <sequence resource="EMBL-CDS" id="ABK84736"/>
    </conflict>
</comment>
<reference key="1">
    <citation type="journal article" date="2007" name="J. Bacteriol.">
        <title>The complete genome sequence of Bacillus thuringiensis Al Hakam.</title>
        <authorList>
            <person name="Challacombe J.F."/>
            <person name="Altherr M.R."/>
            <person name="Xie G."/>
            <person name="Bhotika S.S."/>
            <person name="Brown N."/>
            <person name="Bruce D."/>
            <person name="Campbell C.S."/>
            <person name="Campbell M.L."/>
            <person name="Chen J."/>
            <person name="Chertkov O."/>
            <person name="Cleland C."/>
            <person name="Dimitrijevic M."/>
            <person name="Doggett N.A."/>
            <person name="Fawcett J.J."/>
            <person name="Glavina T."/>
            <person name="Goodwin L.A."/>
            <person name="Green L.D."/>
            <person name="Han C.S."/>
            <person name="Hill K.K."/>
            <person name="Hitchcock P."/>
            <person name="Jackson P.J."/>
            <person name="Keim P."/>
            <person name="Kewalramani A.R."/>
            <person name="Longmire J."/>
            <person name="Lucas S."/>
            <person name="Malfatti S."/>
            <person name="Martinez D."/>
            <person name="McMurry K."/>
            <person name="Meincke L.J."/>
            <person name="Misra M."/>
            <person name="Moseman B.L."/>
            <person name="Mundt M."/>
            <person name="Munk A.C."/>
            <person name="Okinaka R.T."/>
            <person name="Parson-Quintana B."/>
            <person name="Reilly L.P."/>
            <person name="Richardson P."/>
            <person name="Robinson D.L."/>
            <person name="Saunders E."/>
            <person name="Tapia R."/>
            <person name="Tesmer J.G."/>
            <person name="Thayer N."/>
            <person name="Thompson L.S."/>
            <person name="Tice H."/>
            <person name="Ticknor L.O."/>
            <person name="Wills P.L."/>
            <person name="Gilna P."/>
            <person name="Brettin T.S."/>
        </authorList>
    </citation>
    <scope>NUCLEOTIDE SEQUENCE [LARGE SCALE GENOMIC DNA]</scope>
    <source>
        <strain>Al Hakam</strain>
    </source>
</reference>
<dbReference type="EC" id="6.3.2.1" evidence="1"/>
<dbReference type="EMBL" id="CP000485">
    <property type="protein sequence ID" value="ABK84736.1"/>
    <property type="status" value="ALT_INIT"/>
    <property type="molecule type" value="Genomic_DNA"/>
</dbReference>
<dbReference type="RefSeq" id="WP_000707001.1">
    <property type="nucleotide sequence ID" value="NC_008600.1"/>
</dbReference>
<dbReference type="SMR" id="A0RBZ3"/>
<dbReference type="KEGG" id="btl:BALH_1393"/>
<dbReference type="HOGENOM" id="CLU_047148_0_0_9"/>
<dbReference type="UniPathway" id="UPA00028">
    <property type="reaction ID" value="UER00005"/>
</dbReference>
<dbReference type="GO" id="GO:0005829">
    <property type="term" value="C:cytosol"/>
    <property type="evidence" value="ECO:0007669"/>
    <property type="project" value="TreeGrafter"/>
</dbReference>
<dbReference type="GO" id="GO:0005524">
    <property type="term" value="F:ATP binding"/>
    <property type="evidence" value="ECO:0007669"/>
    <property type="project" value="UniProtKB-KW"/>
</dbReference>
<dbReference type="GO" id="GO:0004592">
    <property type="term" value="F:pantoate-beta-alanine ligase activity"/>
    <property type="evidence" value="ECO:0007669"/>
    <property type="project" value="UniProtKB-UniRule"/>
</dbReference>
<dbReference type="GO" id="GO:0015940">
    <property type="term" value="P:pantothenate biosynthetic process"/>
    <property type="evidence" value="ECO:0007669"/>
    <property type="project" value="UniProtKB-UniRule"/>
</dbReference>
<dbReference type="CDD" id="cd00560">
    <property type="entry name" value="PanC"/>
    <property type="match status" value="1"/>
</dbReference>
<dbReference type="FunFam" id="3.30.1300.10:FF:000001">
    <property type="entry name" value="Pantothenate synthetase"/>
    <property type="match status" value="1"/>
</dbReference>
<dbReference type="FunFam" id="3.40.50.620:FF:000013">
    <property type="entry name" value="Pantothenate synthetase"/>
    <property type="match status" value="1"/>
</dbReference>
<dbReference type="Gene3D" id="3.40.50.620">
    <property type="entry name" value="HUPs"/>
    <property type="match status" value="1"/>
</dbReference>
<dbReference type="Gene3D" id="3.30.1300.10">
    <property type="entry name" value="Pantoate-beta-alanine ligase, C-terminal domain"/>
    <property type="match status" value="1"/>
</dbReference>
<dbReference type="HAMAP" id="MF_00158">
    <property type="entry name" value="PanC"/>
    <property type="match status" value="1"/>
</dbReference>
<dbReference type="InterPro" id="IPR004821">
    <property type="entry name" value="Cyt_trans-like"/>
</dbReference>
<dbReference type="InterPro" id="IPR003721">
    <property type="entry name" value="Pantoate_ligase"/>
</dbReference>
<dbReference type="InterPro" id="IPR042176">
    <property type="entry name" value="Pantoate_ligase_C"/>
</dbReference>
<dbReference type="InterPro" id="IPR014729">
    <property type="entry name" value="Rossmann-like_a/b/a_fold"/>
</dbReference>
<dbReference type="NCBIfam" id="TIGR00125">
    <property type="entry name" value="cyt_tran_rel"/>
    <property type="match status" value="1"/>
</dbReference>
<dbReference type="NCBIfam" id="TIGR00018">
    <property type="entry name" value="panC"/>
    <property type="match status" value="1"/>
</dbReference>
<dbReference type="PANTHER" id="PTHR21299">
    <property type="entry name" value="CYTIDYLATE KINASE/PANTOATE-BETA-ALANINE LIGASE"/>
    <property type="match status" value="1"/>
</dbReference>
<dbReference type="PANTHER" id="PTHR21299:SF1">
    <property type="entry name" value="PANTOATE--BETA-ALANINE LIGASE"/>
    <property type="match status" value="1"/>
</dbReference>
<dbReference type="Pfam" id="PF02569">
    <property type="entry name" value="Pantoate_ligase"/>
    <property type="match status" value="1"/>
</dbReference>
<dbReference type="SUPFAM" id="SSF52374">
    <property type="entry name" value="Nucleotidylyl transferase"/>
    <property type="match status" value="1"/>
</dbReference>
<accession>A0RBZ3</accession>
<gene>
    <name evidence="1" type="primary">panC</name>
    <name type="ordered locus">BALH_1393</name>
</gene>
<proteinExistence type="inferred from homology"/>
<organism>
    <name type="scientific">Bacillus thuringiensis (strain Al Hakam)</name>
    <dbReference type="NCBI Taxonomy" id="412694"/>
    <lineage>
        <taxon>Bacteria</taxon>
        <taxon>Bacillati</taxon>
        <taxon>Bacillota</taxon>
        <taxon>Bacilli</taxon>
        <taxon>Bacillales</taxon>
        <taxon>Bacillaceae</taxon>
        <taxon>Bacillus</taxon>
        <taxon>Bacillus cereus group</taxon>
    </lineage>
</organism>
<keyword id="KW-0067">ATP-binding</keyword>
<keyword id="KW-0963">Cytoplasm</keyword>
<keyword id="KW-0436">Ligase</keyword>
<keyword id="KW-0547">Nucleotide-binding</keyword>
<keyword id="KW-0566">Pantothenate biosynthesis</keyword>
<protein>
    <recommendedName>
        <fullName evidence="1">Pantothenate synthetase</fullName>
        <shortName evidence="1">PS</shortName>
        <ecNumber evidence="1">6.3.2.1</ecNumber>
    </recommendedName>
    <alternativeName>
        <fullName evidence="1">Pantoate--beta-alanine ligase</fullName>
    </alternativeName>
    <alternativeName>
        <fullName evidence="1">Pantoate-activating enzyme</fullName>
    </alternativeName>
</protein>
<name>PANC_BACAH</name>
<evidence type="ECO:0000255" key="1">
    <source>
        <dbReference type="HAMAP-Rule" id="MF_00158"/>
    </source>
</evidence>
<evidence type="ECO:0000305" key="2"/>
<sequence>MKIVTTVQEMQHITKELRASGKSIGFVPTMGYLHEGHATLLRKAREENEIVVLSVFVNPLQFGPNEDLDRYPRDIDRDENVAKENGVDYLFYPSVEEMYPVEQTTTVEVVKRTDVLCGKQRPGHFAGVATVLMKLFNITLPTHAYFGMKDAQQVAVIEGFVADFNIPVTIVPVDIVREEDGLAKSSRNVYLSQEERKEAPHLYRSLCMAKERIEAGERNAEIITTLVKEYIETYTKGTVDYADLYAYPSLQVVDQIEGRIILAIAVKFENVRLIDNITLTVK</sequence>
<feature type="chain" id="PRO_0000305397" description="Pantothenate synthetase">
    <location>
        <begin position="1"/>
        <end position="282"/>
    </location>
</feature>
<feature type="active site" description="Proton donor" evidence="1">
    <location>
        <position position="37"/>
    </location>
</feature>
<feature type="binding site" evidence="1">
    <location>
        <begin position="30"/>
        <end position="37"/>
    </location>
    <ligand>
        <name>ATP</name>
        <dbReference type="ChEBI" id="CHEBI:30616"/>
    </ligand>
</feature>
<feature type="binding site" evidence="1">
    <location>
        <position position="61"/>
    </location>
    <ligand>
        <name>(R)-pantoate</name>
        <dbReference type="ChEBI" id="CHEBI:15980"/>
    </ligand>
</feature>
<feature type="binding site" evidence="1">
    <location>
        <position position="61"/>
    </location>
    <ligand>
        <name>beta-alanine</name>
        <dbReference type="ChEBI" id="CHEBI:57966"/>
    </ligand>
</feature>
<feature type="binding site" evidence="1">
    <location>
        <begin position="147"/>
        <end position="150"/>
    </location>
    <ligand>
        <name>ATP</name>
        <dbReference type="ChEBI" id="CHEBI:30616"/>
    </ligand>
</feature>
<feature type="binding site" evidence="1">
    <location>
        <position position="153"/>
    </location>
    <ligand>
        <name>(R)-pantoate</name>
        <dbReference type="ChEBI" id="CHEBI:15980"/>
    </ligand>
</feature>
<feature type="binding site" evidence="1">
    <location>
        <position position="176"/>
    </location>
    <ligand>
        <name>ATP</name>
        <dbReference type="ChEBI" id="CHEBI:30616"/>
    </ligand>
</feature>
<feature type="binding site" evidence="1">
    <location>
        <begin position="184"/>
        <end position="187"/>
    </location>
    <ligand>
        <name>ATP</name>
        <dbReference type="ChEBI" id="CHEBI:30616"/>
    </ligand>
</feature>